<sequence length="98" mass="11103">MLEKIYSVLGTGSCLVKDGEIIESYLLSDEEVKLIEKIAKVIPFLPEKFKVGFFEHEGGRIIAIKHGEVFICFPARSDNVMSELRKVEVEVYDKILSP</sequence>
<organism>
    <name type="scientific">Archaeoglobus fulgidus (strain ATCC 49558 / DSM 4304 / JCM 9628 / NBRC 100126 / VC-16)</name>
    <dbReference type="NCBI Taxonomy" id="224325"/>
    <lineage>
        <taxon>Archaea</taxon>
        <taxon>Methanobacteriati</taxon>
        <taxon>Methanobacteriota</taxon>
        <taxon>Archaeoglobi</taxon>
        <taxon>Archaeoglobales</taxon>
        <taxon>Archaeoglobaceae</taxon>
        <taxon>Archaeoglobus</taxon>
    </lineage>
</organism>
<protein>
    <recommendedName>
        <fullName>Uncharacterized protein AF_1228</fullName>
    </recommendedName>
</protein>
<name>Y1228_ARCFU</name>
<accession>O29040</accession>
<keyword id="KW-1185">Reference proteome</keyword>
<reference key="1">
    <citation type="journal article" date="1997" name="Nature">
        <title>The complete genome sequence of the hyperthermophilic, sulphate-reducing archaeon Archaeoglobus fulgidus.</title>
        <authorList>
            <person name="Klenk H.-P."/>
            <person name="Clayton R.A."/>
            <person name="Tomb J.-F."/>
            <person name="White O."/>
            <person name="Nelson K.E."/>
            <person name="Ketchum K.A."/>
            <person name="Dodson R.J."/>
            <person name="Gwinn M.L."/>
            <person name="Hickey E.K."/>
            <person name="Peterson J.D."/>
            <person name="Richardson D.L."/>
            <person name="Kerlavage A.R."/>
            <person name="Graham D.E."/>
            <person name="Kyrpides N.C."/>
            <person name="Fleischmann R.D."/>
            <person name="Quackenbush J."/>
            <person name="Lee N.H."/>
            <person name="Sutton G.G."/>
            <person name="Gill S.R."/>
            <person name="Kirkness E.F."/>
            <person name="Dougherty B.A."/>
            <person name="McKenney K."/>
            <person name="Adams M.D."/>
            <person name="Loftus B.J."/>
            <person name="Peterson S.N."/>
            <person name="Reich C.I."/>
            <person name="McNeil L.K."/>
            <person name="Badger J.H."/>
            <person name="Glodek A."/>
            <person name="Zhou L."/>
            <person name="Overbeek R."/>
            <person name="Gocayne J.D."/>
            <person name="Weidman J.F."/>
            <person name="McDonald L.A."/>
            <person name="Utterback T.R."/>
            <person name="Cotton M.D."/>
            <person name="Spriggs T."/>
            <person name="Artiach P."/>
            <person name="Kaine B.P."/>
            <person name="Sykes S.M."/>
            <person name="Sadow P.W."/>
            <person name="D'Andrea K.P."/>
            <person name="Bowman C."/>
            <person name="Fujii C."/>
            <person name="Garland S.A."/>
            <person name="Mason T.M."/>
            <person name="Olsen G.J."/>
            <person name="Fraser C.M."/>
            <person name="Smith H.O."/>
            <person name="Woese C.R."/>
            <person name="Venter J.C."/>
        </authorList>
    </citation>
    <scope>NUCLEOTIDE SEQUENCE [LARGE SCALE GENOMIC DNA]</scope>
    <source>
        <strain>ATCC 49558 / DSM 4304 / JCM 9628 / NBRC 100126 / VC-16</strain>
    </source>
</reference>
<dbReference type="EMBL" id="AE000782">
    <property type="protein sequence ID" value="AAB90022.1"/>
    <property type="molecule type" value="Genomic_DNA"/>
</dbReference>
<dbReference type="PIR" id="C69403">
    <property type="entry name" value="C69403"/>
</dbReference>
<dbReference type="RefSeq" id="WP_010878723.1">
    <property type="nucleotide sequence ID" value="NC_000917.1"/>
</dbReference>
<dbReference type="STRING" id="224325.AF_1228"/>
<dbReference type="PaxDb" id="224325-AF_1228"/>
<dbReference type="EnsemblBacteria" id="AAB90022">
    <property type="protein sequence ID" value="AAB90022"/>
    <property type="gene ID" value="AF_1228"/>
</dbReference>
<dbReference type="KEGG" id="afu:AF_1228"/>
<dbReference type="HOGENOM" id="CLU_2327116_0_0_2"/>
<dbReference type="Proteomes" id="UP000002199">
    <property type="component" value="Chromosome"/>
</dbReference>
<gene>
    <name type="ordered locus">AF_1228</name>
</gene>
<proteinExistence type="predicted"/>
<feature type="chain" id="PRO_0000127975" description="Uncharacterized protein AF_1228">
    <location>
        <begin position="1"/>
        <end position="98"/>
    </location>
</feature>